<organism>
    <name type="scientific">Salmonella agona (strain SL483)</name>
    <dbReference type="NCBI Taxonomy" id="454166"/>
    <lineage>
        <taxon>Bacteria</taxon>
        <taxon>Pseudomonadati</taxon>
        <taxon>Pseudomonadota</taxon>
        <taxon>Gammaproteobacteria</taxon>
        <taxon>Enterobacterales</taxon>
        <taxon>Enterobacteriaceae</taxon>
        <taxon>Salmonella</taxon>
    </lineage>
</organism>
<comment type="function">
    <text evidence="1">Catalyzes the synthesis of Und-PP-GlcNAc-ManNAcA-Fuc4NAc (Lipid III), the third lipid-linked intermediate involved in ECA synthesis.</text>
</comment>
<comment type="catalytic activity">
    <reaction evidence="1">
        <text>beta-D-ManNAcA-(1-&gt;4)-alpha-D-GlcNAc-di-trans,octa-cis-undecaprenyl diphosphate + dTDP-4-acetamido-4,6-dideoxy-alpha-D-galactose = alpha-D-FucNAc4-(1-&gt;4)-beta-D-ManNAcA-(1-&gt;4)-D-GlcNAc-undecaprenyl diphosphate + dTDP + H(+)</text>
        <dbReference type="Rhea" id="RHEA:28759"/>
        <dbReference type="ChEBI" id="CHEBI:15378"/>
        <dbReference type="ChEBI" id="CHEBI:58369"/>
        <dbReference type="ChEBI" id="CHEBI:61495"/>
        <dbReference type="ChEBI" id="CHEBI:61496"/>
        <dbReference type="ChEBI" id="CHEBI:68493"/>
        <dbReference type="EC" id="2.4.1.325"/>
    </reaction>
</comment>
<comment type="pathway">
    <text evidence="1">Bacterial outer membrane biogenesis; enterobacterial common antigen biosynthesis.</text>
</comment>
<comment type="subcellular location">
    <subcellularLocation>
        <location evidence="1">Cell inner membrane</location>
        <topology evidence="1">Peripheral membrane protein</topology>
    </subcellularLocation>
</comment>
<comment type="similarity">
    <text evidence="1">Belongs to the glycosyltransferase 56 family.</text>
</comment>
<evidence type="ECO:0000255" key="1">
    <source>
        <dbReference type="HAMAP-Rule" id="MF_01002"/>
    </source>
</evidence>
<dbReference type="EC" id="2.4.1.325" evidence="1"/>
<dbReference type="EMBL" id="CP001138">
    <property type="protein sequence ID" value="ACH51032.1"/>
    <property type="molecule type" value="Genomic_DNA"/>
</dbReference>
<dbReference type="RefSeq" id="WP_000217188.1">
    <property type="nucleotide sequence ID" value="NC_011149.1"/>
</dbReference>
<dbReference type="CAZy" id="GT56">
    <property type="family name" value="Glycosyltransferase Family 56"/>
</dbReference>
<dbReference type="KEGG" id="sea:SeAg_B4153"/>
<dbReference type="HOGENOM" id="CLU_066584_0_0_6"/>
<dbReference type="UniPathway" id="UPA00566"/>
<dbReference type="Proteomes" id="UP000008819">
    <property type="component" value="Chromosome"/>
</dbReference>
<dbReference type="GO" id="GO:0005886">
    <property type="term" value="C:plasma membrane"/>
    <property type="evidence" value="ECO:0007669"/>
    <property type="project" value="UniProtKB-SubCell"/>
</dbReference>
<dbReference type="GO" id="GO:0102031">
    <property type="term" value="F:4-acetamido-4,6-dideoxy-D-galactose transferase activity"/>
    <property type="evidence" value="ECO:0007669"/>
    <property type="project" value="UniProtKB-EC"/>
</dbReference>
<dbReference type="GO" id="GO:0008417">
    <property type="term" value="F:fucosyltransferase activity"/>
    <property type="evidence" value="ECO:0007669"/>
    <property type="project" value="InterPro"/>
</dbReference>
<dbReference type="GO" id="GO:0009246">
    <property type="term" value="P:enterobacterial common antigen biosynthetic process"/>
    <property type="evidence" value="ECO:0007669"/>
    <property type="project" value="UniProtKB-UniRule"/>
</dbReference>
<dbReference type="GO" id="GO:0036065">
    <property type="term" value="P:fucosylation"/>
    <property type="evidence" value="ECO:0007669"/>
    <property type="project" value="InterPro"/>
</dbReference>
<dbReference type="HAMAP" id="MF_01002">
    <property type="entry name" value="WecF_RffT"/>
    <property type="match status" value="1"/>
</dbReference>
<dbReference type="InterPro" id="IPR009993">
    <property type="entry name" value="WecF"/>
</dbReference>
<dbReference type="NCBIfam" id="NF002753">
    <property type="entry name" value="PRK02797.1-2"/>
    <property type="match status" value="1"/>
</dbReference>
<dbReference type="NCBIfam" id="NF002754">
    <property type="entry name" value="PRK02797.1-3"/>
    <property type="match status" value="1"/>
</dbReference>
<dbReference type="Pfam" id="PF07429">
    <property type="entry name" value="Glyco_transf_56"/>
    <property type="match status" value="1"/>
</dbReference>
<feature type="chain" id="PRO_1000134603" description="TDP-N-acetylfucosamine:lipid II N-acetylfucosaminyltransferase">
    <location>
        <begin position="1"/>
        <end position="359"/>
    </location>
</feature>
<keyword id="KW-0997">Cell inner membrane</keyword>
<keyword id="KW-1003">Cell membrane</keyword>
<keyword id="KW-0328">Glycosyltransferase</keyword>
<keyword id="KW-0472">Membrane</keyword>
<keyword id="KW-0808">Transferase</keyword>
<protein>
    <recommendedName>
        <fullName evidence="1">TDP-N-acetylfucosamine:lipid II N-acetylfucosaminyltransferase</fullName>
        <ecNumber evidence="1">2.4.1.325</ecNumber>
    </recommendedName>
    <alternativeName>
        <fullName evidence="1">4-alpha-L-fucosyltransferase</fullName>
    </alternativeName>
    <alternativeName>
        <fullName evidence="1">TDP-Fuc4NAc:lipid II Fuc4NAc transferase</fullName>
        <shortName evidence="1">Fuc4NAc transferase</shortName>
    </alternativeName>
</protein>
<accession>B5EZ52</accession>
<proteinExistence type="inferred from homology"/>
<reference key="1">
    <citation type="journal article" date="2011" name="J. Bacteriol.">
        <title>Comparative genomics of 28 Salmonella enterica isolates: evidence for CRISPR-mediated adaptive sublineage evolution.</title>
        <authorList>
            <person name="Fricke W.F."/>
            <person name="Mammel M.K."/>
            <person name="McDermott P.F."/>
            <person name="Tartera C."/>
            <person name="White D.G."/>
            <person name="Leclerc J.E."/>
            <person name="Ravel J."/>
            <person name="Cebula T.A."/>
        </authorList>
    </citation>
    <scope>NUCLEOTIDE SEQUENCE [LARGE SCALE GENOMIC DNA]</scope>
    <source>
        <strain>SL483</strain>
    </source>
</reference>
<gene>
    <name evidence="1" type="primary">wecF</name>
    <name evidence="1" type="synonym">rffT</name>
    <name type="ordered locus">SeAg_B4153</name>
</gene>
<name>WECF_SALA4</name>
<sequence length="359" mass="40471">MTVLIHVLGSDIPHHNHTVLRFFNDTLAATSEHAREFMVAGEDNGFTESCPALSLRFYGSKKALAQAVIAKAKANRRQRFFFHGQFNTSLWLALLSGGIKPAQFYWHIWGADLYEVSHGLKFRLFYPLRRIAQGRVGGVFATRGDLSYFARQHPGVRGELLYFPTRMDPSLNAMAKERQRAGKLTILVGNSGDRSNQHIAALRAVYQQFGDTVNVVVPMGYPANNQAYIDEVRQAGLALFSAENLQILSEKMEFDTYLALLRQCDLGYFIFARQQGIGTLCLLIQADIPCVLNRDNPFWQDMAEQHLPVLFTTDDLNEQVVREAQRQLASVDKSGITFFSPNYLQPWHNALRIAAGEAE</sequence>